<protein>
    <recommendedName>
        <fullName evidence="1">tRNA dimethylallyltransferase</fullName>
        <ecNumber evidence="1">2.5.1.75</ecNumber>
    </recommendedName>
    <alternativeName>
        <fullName evidence="1">Dimethylallyl diphosphate:tRNA dimethylallyltransferase</fullName>
        <shortName evidence="1">DMAPP:tRNA dimethylallyltransferase</shortName>
        <shortName evidence="1">DMATase</shortName>
    </alternativeName>
    <alternativeName>
        <fullName evidence="1">Isopentenyl-diphosphate:tRNA isopentenyltransferase</fullName>
        <shortName evidence="1">IPP transferase</shortName>
        <shortName evidence="1">IPPT</shortName>
        <shortName evidence="1">IPTase</shortName>
    </alternativeName>
</protein>
<reference key="1">
    <citation type="journal article" date="2007" name="J. Bacteriol.">
        <title>Genome-wide transcriptional changes in Streptococcus gordonii in response to competence signaling peptide.</title>
        <authorList>
            <person name="Vickerman M.M."/>
            <person name="Iobst S."/>
            <person name="Jesionowski A.M."/>
            <person name="Gill S.R."/>
        </authorList>
    </citation>
    <scope>NUCLEOTIDE SEQUENCE [LARGE SCALE GENOMIC DNA]</scope>
    <source>
        <strain>Challis / ATCC 35105 / BCRC 15272 / CH1 / DL1 / V288</strain>
    </source>
</reference>
<accession>A8AWX1</accession>
<organism>
    <name type="scientific">Streptococcus gordonii (strain Challis / ATCC 35105 / BCRC 15272 / CH1 / DL1 / V288)</name>
    <dbReference type="NCBI Taxonomy" id="467705"/>
    <lineage>
        <taxon>Bacteria</taxon>
        <taxon>Bacillati</taxon>
        <taxon>Bacillota</taxon>
        <taxon>Bacilli</taxon>
        <taxon>Lactobacillales</taxon>
        <taxon>Streptococcaceae</taxon>
        <taxon>Streptococcus</taxon>
    </lineage>
</organism>
<keyword id="KW-0067">ATP-binding</keyword>
<keyword id="KW-0460">Magnesium</keyword>
<keyword id="KW-0547">Nucleotide-binding</keyword>
<keyword id="KW-1185">Reference proteome</keyword>
<keyword id="KW-0808">Transferase</keyword>
<keyword id="KW-0819">tRNA processing</keyword>
<evidence type="ECO:0000255" key="1">
    <source>
        <dbReference type="HAMAP-Rule" id="MF_00185"/>
    </source>
</evidence>
<feature type="chain" id="PRO_1000077407" description="tRNA dimethylallyltransferase">
    <location>
        <begin position="1"/>
        <end position="294"/>
    </location>
</feature>
<feature type="region of interest" description="Interaction with substrate tRNA" evidence="1">
    <location>
        <begin position="35"/>
        <end position="38"/>
    </location>
</feature>
<feature type="binding site" evidence="1">
    <location>
        <begin position="10"/>
        <end position="17"/>
    </location>
    <ligand>
        <name>ATP</name>
        <dbReference type="ChEBI" id="CHEBI:30616"/>
    </ligand>
</feature>
<feature type="binding site" evidence="1">
    <location>
        <begin position="12"/>
        <end position="17"/>
    </location>
    <ligand>
        <name>substrate</name>
    </ligand>
</feature>
<feature type="site" description="Interaction with substrate tRNA" evidence="1">
    <location>
        <position position="101"/>
    </location>
</feature>
<feature type="site" description="Interaction with substrate tRNA" evidence="1">
    <location>
        <position position="127"/>
    </location>
</feature>
<proteinExistence type="inferred from homology"/>
<comment type="function">
    <text evidence="1">Catalyzes the transfer of a dimethylallyl group onto the adenine at position 37 in tRNAs that read codons beginning with uridine, leading to the formation of N6-(dimethylallyl)adenosine (i(6)A).</text>
</comment>
<comment type="catalytic activity">
    <reaction evidence="1">
        <text>adenosine(37) in tRNA + dimethylallyl diphosphate = N(6)-dimethylallyladenosine(37) in tRNA + diphosphate</text>
        <dbReference type="Rhea" id="RHEA:26482"/>
        <dbReference type="Rhea" id="RHEA-COMP:10162"/>
        <dbReference type="Rhea" id="RHEA-COMP:10375"/>
        <dbReference type="ChEBI" id="CHEBI:33019"/>
        <dbReference type="ChEBI" id="CHEBI:57623"/>
        <dbReference type="ChEBI" id="CHEBI:74411"/>
        <dbReference type="ChEBI" id="CHEBI:74415"/>
        <dbReference type="EC" id="2.5.1.75"/>
    </reaction>
</comment>
<comment type="cofactor">
    <cofactor evidence="1">
        <name>Mg(2+)</name>
        <dbReference type="ChEBI" id="CHEBI:18420"/>
    </cofactor>
</comment>
<comment type="subunit">
    <text evidence="1">Monomer.</text>
</comment>
<comment type="similarity">
    <text evidence="1">Belongs to the IPP transferase family.</text>
</comment>
<dbReference type="EC" id="2.5.1.75" evidence="1"/>
<dbReference type="EMBL" id="CP000725">
    <property type="protein sequence ID" value="ABV10298.1"/>
    <property type="molecule type" value="Genomic_DNA"/>
</dbReference>
<dbReference type="RefSeq" id="WP_012000409.1">
    <property type="nucleotide sequence ID" value="NC_009785.1"/>
</dbReference>
<dbReference type="SMR" id="A8AWX1"/>
<dbReference type="STRING" id="467705.SGO_0992"/>
<dbReference type="KEGG" id="sgo:SGO_0992"/>
<dbReference type="eggNOG" id="COG0324">
    <property type="taxonomic scope" value="Bacteria"/>
</dbReference>
<dbReference type="HOGENOM" id="CLU_032616_0_1_9"/>
<dbReference type="Proteomes" id="UP000001131">
    <property type="component" value="Chromosome"/>
</dbReference>
<dbReference type="GO" id="GO:0005524">
    <property type="term" value="F:ATP binding"/>
    <property type="evidence" value="ECO:0007669"/>
    <property type="project" value="UniProtKB-UniRule"/>
</dbReference>
<dbReference type="GO" id="GO:0052381">
    <property type="term" value="F:tRNA dimethylallyltransferase activity"/>
    <property type="evidence" value="ECO:0007669"/>
    <property type="project" value="UniProtKB-UniRule"/>
</dbReference>
<dbReference type="GO" id="GO:0006400">
    <property type="term" value="P:tRNA modification"/>
    <property type="evidence" value="ECO:0007669"/>
    <property type="project" value="TreeGrafter"/>
</dbReference>
<dbReference type="Gene3D" id="3.40.50.300">
    <property type="entry name" value="P-loop containing nucleotide triphosphate hydrolases"/>
    <property type="match status" value="1"/>
</dbReference>
<dbReference type="HAMAP" id="MF_00185">
    <property type="entry name" value="IPP_trans"/>
    <property type="match status" value="1"/>
</dbReference>
<dbReference type="InterPro" id="IPR039657">
    <property type="entry name" value="Dimethylallyltransferase"/>
</dbReference>
<dbReference type="InterPro" id="IPR018022">
    <property type="entry name" value="IPT"/>
</dbReference>
<dbReference type="InterPro" id="IPR027417">
    <property type="entry name" value="P-loop_NTPase"/>
</dbReference>
<dbReference type="NCBIfam" id="TIGR00174">
    <property type="entry name" value="miaA"/>
    <property type="match status" value="1"/>
</dbReference>
<dbReference type="PANTHER" id="PTHR11088">
    <property type="entry name" value="TRNA DIMETHYLALLYLTRANSFERASE"/>
    <property type="match status" value="1"/>
</dbReference>
<dbReference type="PANTHER" id="PTHR11088:SF60">
    <property type="entry name" value="TRNA DIMETHYLALLYLTRANSFERASE"/>
    <property type="match status" value="1"/>
</dbReference>
<dbReference type="Pfam" id="PF01715">
    <property type="entry name" value="IPPT"/>
    <property type="match status" value="1"/>
</dbReference>
<dbReference type="SUPFAM" id="SSF52540">
    <property type="entry name" value="P-loop containing nucleoside triphosphate hydrolases"/>
    <property type="match status" value="2"/>
</dbReference>
<gene>
    <name evidence="1" type="primary">miaA</name>
    <name type="ordered locus">SGO_0992</name>
</gene>
<name>MIAA_STRGC</name>
<sequence length="294" mass="33295">MKTKIIVIVGPTAVGKTALSIEVAKAFNGQIISGDSQQVYRGLNIGTAKIRPEEQEGISHYLLDVRDVGESYSAYDFVTEATQAIREIEAQGQLPIICGGTGLYIQSLLEGYHLGGSVPHEEILAYRAQLDSWSDEDLFGKIAELGIEIPQINRRRAMRALEIAHLGGQLENNLPDYEALLICLDDKREKLYERINQRVDLMIEDGLLEEARWLFDKAPTSQASKGIGYKELFPYFAGQVSLEEAVDKLKQNTRRFAKRQLTWFRNRMSVTFYQVGNPDYKNQVMEDIKNFLDK</sequence>